<reference key="1">
    <citation type="journal article" date="2007" name="BMC Genomics">
        <title>The full-ORF clone resource of the German cDNA consortium.</title>
        <authorList>
            <person name="Bechtel S."/>
            <person name="Rosenfelder H."/>
            <person name="Duda A."/>
            <person name="Schmidt C.P."/>
            <person name="Ernst U."/>
            <person name="Wellenreuther R."/>
            <person name="Mehrle A."/>
            <person name="Schuster C."/>
            <person name="Bahr A."/>
            <person name="Bloecker H."/>
            <person name="Heubner D."/>
            <person name="Hoerlein A."/>
            <person name="Michel G."/>
            <person name="Wedler H."/>
            <person name="Koehrer K."/>
            <person name="Ottenwaelder B."/>
            <person name="Poustka A."/>
            <person name="Wiemann S."/>
            <person name="Schupp I."/>
        </authorList>
    </citation>
    <scope>NUCLEOTIDE SEQUENCE [LARGE SCALE MRNA] (ISOFORM 2)</scope>
    <scope>NUCLEOTIDE SEQUENCE [LARGE SCALE MRNA] OF 905-1530 (ISOFORMS 1/2)</scope>
    <scope>VARIANT MET-1528</scope>
    <source>
        <tissue>Brain</tissue>
        <tissue>Testis</tissue>
    </source>
</reference>
<reference key="2">
    <citation type="journal article" date="2006" name="Nature">
        <title>The DNA sequence and biological annotation of human chromosome 1.</title>
        <authorList>
            <person name="Gregory S.G."/>
            <person name="Barlow K.F."/>
            <person name="McLay K.E."/>
            <person name="Kaul R."/>
            <person name="Swarbreck D."/>
            <person name="Dunham A."/>
            <person name="Scott C.E."/>
            <person name="Howe K.L."/>
            <person name="Woodfine K."/>
            <person name="Spencer C.C.A."/>
            <person name="Jones M.C."/>
            <person name="Gillson C."/>
            <person name="Searle S."/>
            <person name="Zhou Y."/>
            <person name="Kokocinski F."/>
            <person name="McDonald L."/>
            <person name="Evans R."/>
            <person name="Phillips K."/>
            <person name="Atkinson A."/>
            <person name="Cooper R."/>
            <person name="Jones C."/>
            <person name="Hall R.E."/>
            <person name="Andrews T.D."/>
            <person name="Lloyd C."/>
            <person name="Ainscough R."/>
            <person name="Almeida J.P."/>
            <person name="Ambrose K.D."/>
            <person name="Anderson F."/>
            <person name="Andrew R.W."/>
            <person name="Ashwell R.I.S."/>
            <person name="Aubin K."/>
            <person name="Babbage A.K."/>
            <person name="Bagguley C.L."/>
            <person name="Bailey J."/>
            <person name="Beasley H."/>
            <person name="Bethel G."/>
            <person name="Bird C.P."/>
            <person name="Bray-Allen S."/>
            <person name="Brown J.Y."/>
            <person name="Brown A.J."/>
            <person name="Buckley D."/>
            <person name="Burton J."/>
            <person name="Bye J."/>
            <person name="Carder C."/>
            <person name="Chapman J.C."/>
            <person name="Clark S.Y."/>
            <person name="Clarke G."/>
            <person name="Clee C."/>
            <person name="Cobley V."/>
            <person name="Collier R.E."/>
            <person name="Corby N."/>
            <person name="Coville G.J."/>
            <person name="Davies J."/>
            <person name="Deadman R."/>
            <person name="Dunn M."/>
            <person name="Earthrowl M."/>
            <person name="Ellington A.G."/>
            <person name="Errington H."/>
            <person name="Frankish A."/>
            <person name="Frankland J."/>
            <person name="French L."/>
            <person name="Garner P."/>
            <person name="Garnett J."/>
            <person name="Gay L."/>
            <person name="Ghori M.R.J."/>
            <person name="Gibson R."/>
            <person name="Gilby L.M."/>
            <person name="Gillett W."/>
            <person name="Glithero R.J."/>
            <person name="Grafham D.V."/>
            <person name="Griffiths C."/>
            <person name="Griffiths-Jones S."/>
            <person name="Grocock R."/>
            <person name="Hammond S."/>
            <person name="Harrison E.S.I."/>
            <person name="Hart E."/>
            <person name="Haugen E."/>
            <person name="Heath P.D."/>
            <person name="Holmes S."/>
            <person name="Holt K."/>
            <person name="Howden P.J."/>
            <person name="Hunt A.R."/>
            <person name="Hunt S.E."/>
            <person name="Hunter G."/>
            <person name="Isherwood J."/>
            <person name="James R."/>
            <person name="Johnson C."/>
            <person name="Johnson D."/>
            <person name="Joy A."/>
            <person name="Kay M."/>
            <person name="Kershaw J.K."/>
            <person name="Kibukawa M."/>
            <person name="Kimberley A.M."/>
            <person name="King A."/>
            <person name="Knights A.J."/>
            <person name="Lad H."/>
            <person name="Laird G."/>
            <person name="Lawlor S."/>
            <person name="Leongamornlert D.A."/>
            <person name="Lloyd D.M."/>
            <person name="Loveland J."/>
            <person name="Lovell J."/>
            <person name="Lush M.J."/>
            <person name="Lyne R."/>
            <person name="Martin S."/>
            <person name="Mashreghi-Mohammadi M."/>
            <person name="Matthews L."/>
            <person name="Matthews N.S.W."/>
            <person name="McLaren S."/>
            <person name="Milne S."/>
            <person name="Mistry S."/>
            <person name="Moore M.J.F."/>
            <person name="Nickerson T."/>
            <person name="O'Dell C.N."/>
            <person name="Oliver K."/>
            <person name="Palmeiri A."/>
            <person name="Palmer S.A."/>
            <person name="Parker A."/>
            <person name="Patel D."/>
            <person name="Pearce A.V."/>
            <person name="Peck A.I."/>
            <person name="Pelan S."/>
            <person name="Phelps K."/>
            <person name="Phillimore B.J."/>
            <person name="Plumb R."/>
            <person name="Rajan J."/>
            <person name="Raymond C."/>
            <person name="Rouse G."/>
            <person name="Saenphimmachak C."/>
            <person name="Sehra H.K."/>
            <person name="Sheridan E."/>
            <person name="Shownkeen R."/>
            <person name="Sims S."/>
            <person name="Skuce C.D."/>
            <person name="Smith M."/>
            <person name="Steward C."/>
            <person name="Subramanian S."/>
            <person name="Sycamore N."/>
            <person name="Tracey A."/>
            <person name="Tromans A."/>
            <person name="Van Helmond Z."/>
            <person name="Wall M."/>
            <person name="Wallis J.M."/>
            <person name="White S."/>
            <person name="Whitehead S.L."/>
            <person name="Wilkinson J.E."/>
            <person name="Willey D.L."/>
            <person name="Williams H."/>
            <person name="Wilming L."/>
            <person name="Wray P.W."/>
            <person name="Wu Z."/>
            <person name="Coulson A."/>
            <person name="Vaudin M."/>
            <person name="Sulston J.E."/>
            <person name="Durbin R.M."/>
            <person name="Hubbard T."/>
            <person name="Wooster R."/>
            <person name="Dunham I."/>
            <person name="Carter N.P."/>
            <person name="McVean G."/>
            <person name="Ross M.T."/>
            <person name="Harrow J."/>
            <person name="Olson M.V."/>
            <person name="Beck S."/>
            <person name="Rogers J."/>
            <person name="Bentley D.R."/>
        </authorList>
    </citation>
    <scope>NUCLEOTIDE SEQUENCE [LARGE SCALE GENOMIC DNA]</scope>
</reference>
<reference key="3">
    <citation type="journal article" date="2004" name="Genome Res.">
        <title>The status, quality, and expansion of the NIH full-length cDNA project: the Mammalian Gene Collection (MGC).</title>
        <authorList>
            <consortium name="The MGC Project Team"/>
        </authorList>
    </citation>
    <scope>NUCLEOTIDE SEQUENCE [LARGE SCALE MRNA] (ISOFORM 3)</scope>
    <source>
        <tissue>Brain</tissue>
    </source>
</reference>
<reference key="4">
    <citation type="journal article" date="2004" name="Nat. Genet.">
        <title>Complete sequencing and characterization of 21,243 full-length human cDNAs.</title>
        <authorList>
            <person name="Ota T."/>
            <person name="Suzuki Y."/>
            <person name="Nishikawa T."/>
            <person name="Otsuki T."/>
            <person name="Sugiyama T."/>
            <person name="Irie R."/>
            <person name="Wakamatsu A."/>
            <person name="Hayashi K."/>
            <person name="Sato H."/>
            <person name="Nagai K."/>
            <person name="Kimura K."/>
            <person name="Makita H."/>
            <person name="Sekine M."/>
            <person name="Obayashi M."/>
            <person name="Nishi T."/>
            <person name="Shibahara T."/>
            <person name="Tanaka T."/>
            <person name="Ishii S."/>
            <person name="Yamamoto J."/>
            <person name="Saito K."/>
            <person name="Kawai Y."/>
            <person name="Isono Y."/>
            <person name="Nakamura Y."/>
            <person name="Nagahari K."/>
            <person name="Murakami K."/>
            <person name="Yasuda T."/>
            <person name="Iwayanagi T."/>
            <person name="Wagatsuma M."/>
            <person name="Shiratori A."/>
            <person name="Sudo H."/>
            <person name="Hosoiri T."/>
            <person name="Kaku Y."/>
            <person name="Kodaira H."/>
            <person name="Kondo H."/>
            <person name="Sugawara M."/>
            <person name="Takahashi M."/>
            <person name="Kanda K."/>
            <person name="Yokoi T."/>
            <person name="Furuya T."/>
            <person name="Kikkawa E."/>
            <person name="Omura Y."/>
            <person name="Abe K."/>
            <person name="Kamihara K."/>
            <person name="Katsuta N."/>
            <person name="Sato K."/>
            <person name="Tanikawa M."/>
            <person name="Yamazaki M."/>
            <person name="Ninomiya K."/>
            <person name="Ishibashi T."/>
            <person name="Yamashita H."/>
            <person name="Murakawa K."/>
            <person name="Fujimori K."/>
            <person name="Tanai H."/>
            <person name="Kimata M."/>
            <person name="Watanabe M."/>
            <person name="Hiraoka S."/>
            <person name="Chiba Y."/>
            <person name="Ishida S."/>
            <person name="Ono Y."/>
            <person name="Takiguchi S."/>
            <person name="Watanabe S."/>
            <person name="Yosida M."/>
            <person name="Hotuta T."/>
            <person name="Kusano J."/>
            <person name="Kanehori K."/>
            <person name="Takahashi-Fujii A."/>
            <person name="Hara H."/>
            <person name="Tanase T.-O."/>
            <person name="Nomura Y."/>
            <person name="Togiya S."/>
            <person name="Komai F."/>
            <person name="Hara R."/>
            <person name="Takeuchi K."/>
            <person name="Arita M."/>
            <person name="Imose N."/>
            <person name="Musashino K."/>
            <person name="Yuuki H."/>
            <person name="Oshima A."/>
            <person name="Sasaki N."/>
            <person name="Aotsuka S."/>
            <person name="Yoshikawa Y."/>
            <person name="Matsunawa H."/>
            <person name="Ichihara T."/>
            <person name="Shiohata N."/>
            <person name="Sano S."/>
            <person name="Moriya S."/>
            <person name="Momiyama H."/>
            <person name="Satoh N."/>
            <person name="Takami S."/>
            <person name="Terashima Y."/>
            <person name="Suzuki O."/>
            <person name="Nakagawa S."/>
            <person name="Senoh A."/>
            <person name="Mizoguchi H."/>
            <person name="Goto Y."/>
            <person name="Shimizu F."/>
            <person name="Wakebe H."/>
            <person name="Hishigaki H."/>
            <person name="Watanabe T."/>
            <person name="Sugiyama A."/>
            <person name="Takemoto M."/>
            <person name="Kawakami B."/>
            <person name="Yamazaki M."/>
            <person name="Watanabe K."/>
            <person name="Kumagai A."/>
            <person name="Itakura S."/>
            <person name="Fukuzumi Y."/>
            <person name="Fujimori Y."/>
            <person name="Komiyama M."/>
            <person name="Tashiro H."/>
            <person name="Tanigami A."/>
            <person name="Fujiwara T."/>
            <person name="Ono T."/>
            <person name="Yamada K."/>
            <person name="Fujii Y."/>
            <person name="Ozaki K."/>
            <person name="Hirao M."/>
            <person name="Ohmori Y."/>
            <person name="Kawabata A."/>
            <person name="Hikiji T."/>
            <person name="Kobatake N."/>
            <person name="Inagaki H."/>
            <person name="Ikema Y."/>
            <person name="Okamoto S."/>
            <person name="Okitani R."/>
            <person name="Kawakami T."/>
            <person name="Noguchi S."/>
            <person name="Itoh T."/>
            <person name="Shigeta K."/>
            <person name="Senba T."/>
            <person name="Matsumura K."/>
            <person name="Nakajima Y."/>
            <person name="Mizuno T."/>
            <person name="Morinaga M."/>
            <person name="Sasaki M."/>
            <person name="Togashi T."/>
            <person name="Oyama M."/>
            <person name="Hata H."/>
            <person name="Watanabe M."/>
            <person name="Komatsu T."/>
            <person name="Mizushima-Sugano J."/>
            <person name="Satoh T."/>
            <person name="Shirai Y."/>
            <person name="Takahashi Y."/>
            <person name="Nakagawa K."/>
            <person name="Okumura K."/>
            <person name="Nagase T."/>
            <person name="Nomura N."/>
            <person name="Kikuchi H."/>
            <person name="Masuho Y."/>
            <person name="Yamashita R."/>
            <person name="Nakai K."/>
            <person name="Yada T."/>
            <person name="Nakamura Y."/>
            <person name="Ohara O."/>
            <person name="Isogai T."/>
            <person name="Sugano S."/>
        </authorList>
    </citation>
    <scope>NUCLEOTIDE SEQUENCE [LARGE SCALE MRNA] OF 1-1176 (ISOFORM 1)</scope>
    <scope>VARIANT ALA-264</scope>
    <source>
        <tissue>Thalamus</tissue>
    </source>
</reference>
<reference key="5">
    <citation type="journal article" date="2019" name="Sci. Rep.">
        <title>ERICH3 in Primary Cilia Regulates Cilium Formation and the Localisations of Ciliary Transport and Sonic Hedgehog Signaling Proteins.</title>
        <authorList>
            <person name="Alsolami M."/>
            <person name="Kuhns S."/>
            <person name="Alsulami M."/>
            <person name="Blacque O.E."/>
        </authorList>
    </citation>
    <scope>FUNCTION</scope>
    <scope>SUBCELLULAR LOCATION</scope>
</reference>
<reference key="6">
    <citation type="journal article" date="2021" name="Mol. Psychiatry">
        <title>ERICH3: vesicular association and antidepressant treatment response.</title>
        <authorList>
            <person name="Liu D."/>
            <person name="Zhuang Y."/>
            <person name="Zhang L."/>
            <person name="Gao H."/>
            <person name="Neavin D."/>
            <person name="Carrillo-Roa T."/>
            <person name="Wang Y."/>
            <person name="Yu J."/>
            <person name="Qin S."/>
            <person name="Kim D.C."/>
            <person name="Liu E."/>
            <person name="Nguyen T.T.L."/>
            <person name="Biernacka J.M."/>
            <person name="Kaddurah-Daouk R."/>
            <person name="Dunlop B.W."/>
            <person name="Craighead W.E."/>
            <person name="Mayberg H.S."/>
            <person name="Binder E.B."/>
            <person name="Frye M.A."/>
            <person name="Wang L."/>
            <person name="Weinshilboum R.M."/>
        </authorList>
    </citation>
    <scope>FUNCTION</scope>
    <scope>TISSUE SPECIFICITY</scope>
    <scope>SUBCELLULAR LOCATION</scope>
    <scope>INTERACTION WITH CLTC; AP2A2 AND PIK3C2A</scope>
</reference>
<name>ERIC3_HUMAN</name>
<comment type="function">
    <text evidence="4 5">Component of the primary cilium that controls cilium formation and length (PubMed:31712586). May function within retrograde intraflagellar transport (IFT)-associated pathways to remove signaling proteins from primary cilia (PubMed:31712586). Also involved in neuronal vesicle biogenesis and neurotransmitter vesicular function (PubMed:33230203).</text>
</comment>
<comment type="subunit">
    <text evidence="5">Interacts with CLTC/clathrin heavy chain 1, AP2A2/AP-2 complex subunit alpha-2, and PIK3C2A/phosphatidylinositol 4-phosphate 3-kinase C2 domain-containing subunit alpha.</text>
</comment>
<comment type="interaction">
    <interactant intactId="EBI-20839496">
        <id>Q5RHP9-3</id>
    </interactant>
    <interactant intactId="EBI-2432309">
        <id>Q92876</id>
        <label>KLK6</label>
    </interactant>
    <organismsDiffer>false</organismsDiffer>
    <experiments>3</experiments>
</comment>
<comment type="subcellular location">
    <subcellularLocation>
        <location evidence="4">Cell projection</location>
        <location evidence="4">Cilium</location>
    </subcellularLocation>
    <subcellularLocation>
        <location evidence="5">Cytoplasm</location>
    </subcellularLocation>
    <text evidence="4 5">Located in primary cilia, with enriched localization along the entire ciliary axoneme (PubMed:31712586). Localized to the cytoplasm in neurons and appears to be vesicle-associated (PubMed:33230203).</text>
</comment>
<comment type="alternative products">
    <event type="alternative splicing"/>
    <isoform>
        <id>Q5RHP9-1</id>
        <name>1</name>
        <sequence type="displayed"/>
    </isoform>
    <isoform>
        <id>Q5RHP9-2</id>
        <name>2</name>
        <sequence type="described" ref="VSP_028159"/>
    </isoform>
    <isoform>
        <id>Q5RHP9-3</id>
        <name>3</name>
        <sequence type="described" ref="VSP_028160 VSP_028161 VSP_028162 VSP_028163"/>
    </isoform>
</comment>
<comment type="tissue specificity">
    <text evidence="5">Expressed in dopaminergic and serotoninergic neurons.</text>
</comment>
<comment type="sequence caution" evidence="9">
    <conflict type="miscellaneous discrepancy">
        <sequence resource="EMBL-CDS" id="BAC86994"/>
    </conflict>
    <text>Contaminating sequence. Potential poly-A sequence.</text>
</comment>
<organism>
    <name type="scientific">Homo sapiens</name>
    <name type="common">Human</name>
    <dbReference type="NCBI Taxonomy" id="9606"/>
    <lineage>
        <taxon>Eukaryota</taxon>
        <taxon>Metazoa</taxon>
        <taxon>Chordata</taxon>
        <taxon>Craniata</taxon>
        <taxon>Vertebrata</taxon>
        <taxon>Euteleostomi</taxon>
        <taxon>Mammalia</taxon>
        <taxon>Eutheria</taxon>
        <taxon>Euarchontoglires</taxon>
        <taxon>Primates</taxon>
        <taxon>Haplorrhini</taxon>
        <taxon>Catarrhini</taxon>
        <taxon>Hominidae</taxon>
        <taxon>Homo</taxon>
    </lineage>
</organism>
<gene>
    <name evidence="10" type="primary">ERICH3</name>
    <name type="synonym">C1orf173</name>
</gene>
<dbReference type="EMBL" id="AL834414">
    <property type="protein sequence ID" value="CAD39076.1"/>
    <property type="molecule type" value="mRNA"/>
</dbReference>
<dbReference type="EMBL" id="CR749349">
    <property type="protein sequence ID" value="CAH18202.1"/>
    <property type="molecule type" value="mRNA"/>
</dbReference>
<dbReference type="EMBL" id="AC096950">
    <property type="status" value="NOT_ANNOTATED_CDS"/>
    <property type="molecule type" value="Genomic_DNA"/>
</dbReference>
<dbReference type="EMBL" id="BX470253">
    <property type="status" value="NOT_ANNOTATED_CDS"/>
    <property type="molecule type" value="Genomic_DNA"/>
</dbReference>
<dbReference type="EMBL" id="BC073916">
    <property type="protein sequence ID" value="AAH73916.1"/>
    <property type="molecule type" value="mRNA"/>
</dbReference>
<dbReference type="EMBL" id="AK127470">
    <property type="protein sequence ID" value="BAC86994.1"/>
    <property type="status" value="ALT_SEQ"/>
    <property type="molecule type" value="mRNA"/>
</dbReference>
<dbReference type="CCDS" id="CCDS30755.1">
    <molecule id="Q5RHP9-1"/>
</dbReference>
<dbReference type="RefSeq" id="NP_001002912.4">
    <molecule id="Q5RHP9-1"/>
    <property type="nucleotide sequence ID" value="NM_001002912.4"/>
</dbReference>
<dbReference type="RefSeq" id="XP_016855763.1">
    <property type="nucleotide sequence ID" value="XM_017000274.1"/>
</dbReference>
<dbReference type="RefSeq" id="XP_016855767.1">
    <molecule id="Q5RHP9-2"/>
    <property type="nucleotide sequence ID" value="XM_017000278.2"/>
</dbReference>
<dbReference type="RefSeq" id="XP_016855768.1">
    <molecule id="Q5RHP9-2"/>
    <property type="nucleotide sequence ID" value="XM_017000279.3"/>
</dbReference>
<dbReference type="RefSeq" id="XP_016855769.1">
    <molecule id="Q5RHP9-2"/>
    <property type="nucleotide sequence ID" value="XM_017000280.3"/>
</dbReference>
<dbReference type="RefSeq" id="XP_016855770.1">
    <property type="nucleotide sequence ID" value="XM_017000281.1"/>
</dbReference>
<dbReference type="RefSeq" id="XP_016855771.1">
    <molecule id="Q5RHP9-2"/>
    <property type="nucleotide sequence ID" value="XM_017000282.2"/>
</dbReference>
<dbReference type="RefSeq" id="XP_016855772.1">
    <molecule id="Q5RHP9-2"/>
    <property type="nucleotide sequence ID" value="XM_017000283.3"/>
</dbReference>
<dbReference type="RefSeq" id="XP_016855773.1">
    <property type="nucleotide sequence ID" value="XM_017000284.1"/>
</dbReference>
<dbReference type="RefSeq" id="XP_016855774.1">
    <molecule id="Q5RHP9-2"/>
    <property type="nucleotide sequence ID" value="XM_017000285.3"/>
</dbReference>
<dbReference type="RefSeq" id="XP_047301305.1">
    <molecule id="Q5RHP9-2"/>
    <property type="nucleotide sequence ID" value="XM_047445349.1"/>
</dbReference>
<dbReference type="BioGRID" id="126046">
    <property type="interactions" value="8"/>
</dbReference>
<dbReference type="FunCoup" id="Q5RHP9">
    <property type="interactions" value="62"/>
</dbReference>
<dbReference type="IntAct" id="Q5RHP9">
    <property type="interactions" value="10"/>
</dbReference>
<dbReference type="STRING" id="9606.ENSP00000322609"/>
<dbReference type="GlyGen" id="Q5RHP9">
    <property type="glycosylation" value="1 site, 1 O-linked glycan (1 site)"/>
</dbReference>
<dbReference type="iPTMnet" id="Q5RHP9"/>
<dbReference type="PhosphoSitePlus" id="Q5RHP9"/>
<dbReference type="BioMuta" id="ERICH3"/>
<dbReference type="DMDM" id="74743374"/>
<dbReference type="jPOST" id="Q5RHP9"/>
<dbReference type="MassIVE" id="Q5RHP9"/>
<dbReference type="PaxDb" id="9606-ENSP00000322609"/>
<dbReference type="PeptideAtlas" id="Q5RHP9"/>
<dbReference type="ProteomicsDB" id="63735">
    <molecule id="Q5RHP9-1"/>
</dbReference>
<dbReference type="ProteomicsDB" id="63736">
    <molecule id="Q5RHP9-2"/>
</dbReference>
<dbReference type="ProteomicsDB" id="63737">
    <molecule id="Q5RHP9-3"/>
</dbReference>
<dbReference type="Antibodypedia" id="49494">
    <property type="antibodies" value="42 antibodies from 7 providers"/>
</dbReference>
<dbReference type="Ensembl" id="ENST00000326665.10">
    <molecule id="Q5RHP9-1"/>
    <property type="protein sequence ID" value="ENSP00000322609.5"/>
    <property type="gene ID" value="ENSG00000178965.14"/>
</dbReference>
<dbReference type="Ensembl" id="ENST00000420661.6">
    <molecule id="Q5RHP9-3"/>
    <property type="protein sequence ID" value="ENSP00000398581.2"/>
    <property type="gene ID" value="ENSG00000178965.14"/>
</dbReference>
<dbReference type="GeneID" id="127254"/>
<dbReference type="KEGG" id="hsa:127254"/>
<dbReference type="MANE-Select" id="ENST00000326665.10">
    <property type="protein sequence ID" value="ENSP00000322609.5"/>
    <property type="RefSeq nucleotide sequence ID" value="NM_001002912.5"/>
    <property type="RefSeq protein sequence ID" value="NP_001002912.4"/>
</dbReference>
<dbReference type="UCSC" id="uc001dgg.3">
    <molecule id="Q5RHP9-1"/>
    <property type="organism name" value="human"/>
</dbReference>
<dbReference type="AGR" id="HGNC:25346"/>
<dbReference type="CTD" id="127254"/>
<dbReference type="DisGeNET" id="127254"/>
<dbReference type="GeneCards" id="ERICH3"/>
<dbReference type="HGNC" id="HGNC:25346">
    <property type="gene designation" value="ERICH3"/>
</dbReference>
<dbReference type="HPA" id="ENSG00000178965">
    <property type="expression patterns" value="Tissue enhanced (brain, fallopian tube, testis)"/>
</dbReference>
<dbReference type="MIM" id="620866">
    <property type="type" value="gene"/>
</dbReference>
<dbReference type="neXtProt" id="NX_Q5RHP9"/>
<dbReference type="OpenTargets" id="ENSG00000178965"/>
<dbReference type="PharmGKB" id="PA142672422"/>
<dbReference type="VEuPathDB" id="HostDB:ENSG00000178965"/>
<dbReference type="eggNOG" id="ENOG502QVG1">
    <property type="taxonomic scope" value="Eukaryota"/>
</dbReference>
<dbReference type="GeneTree" id="ENSGT00530000064485"/>
<dbReference type="HOGENOM" id="CLU_004102_0_0_1"/>
<dbReference type="InParanoid" id="Q5RHP9"/>
<dbReference type="OMA" id="PEEDPIM"/>
<dbReference type="OrthoDB" id="120976at2759"/>
<dbReference type="PAN-GO" id="Q5RHP9">
    <property type="GO annotations" value="0 GO annotations based on evolutionary models"/>
</dbReference>
<dbReference type="PhylomeDB" id="Q5RHP9"/>
<dbReference type="TreeFam" id="TF331348"/>
<dbReference type="PathwayCommons" id="Q5RHP9"/>
<dbReference type="SignaLink" id="Q5RHP9"/>
<dbReference type="BioGRID-ORCS" id="127254">
    <property type="hits" value="8 hits in 1117 CRISPR screens"/>
</dbReference>
<dbReference type="ChiTaRS" id="ERICH3">
    <property type="organism name" value="human"/>
</dbReference>
<dbReference type="GenomeRNAi" id="127254"/>
<dbReference type="Pharos" id="Q5RHP9">
    <property type="development level" value="Tdark"/>
</dbReference>
<dbReference type="PRO" id="PR:Q5RHP9"/>
<dbReference type="Proteomes" id="UP000005640">
    <property type="component" value="Chromosome 1"/>
</dbReference>
<dbReference type="RNAct" id="Q5RHP9">
    <property type="molecule type" value="protein"/>
</dbReference>
<dbReference type="Bgee" id="ENSG00000178965">
    <property type="expression patterns" value="Expressed in bronchial epithelial cell and 131 other cell types or tissues"/>
</dbReference>
<dbReference type="ExpressionAtlas" id="Q5RHP9">
    <property type="expression patterns" value="baseline and differential"/>
</dbReference>
<dbReference type="GO" id="GO:0005737">
    <property type="term" value="C:cytoplasm"/>
    <property type="evidence" value="ECO:0000314"/>
    <property type="project" value="UniProtKB"/>
</dbReference>
<dbReference type="GO" id="GO:0097730">
    <property type="term" value="C:non-motile cilium"/>
    <property type="evidence" value="ECO:0000314"/>
    <property type="project" value="UniProtKB"/>
</dbReference>
<dbReference type="GO" id="GO:0060271">
    <property type="term" value="P:cilium assembly"/>
    <property type="evidence" value="ECO:0000315"/>
    <property type="project" value="UniProtKB"/>
</dbReference>
<dbReference type="InterPro" id="IPR048257">
    <property type="entry name" value="DUF4590"/>
</dbReference>
<dbReference type="InterPro" id="IPR027962">
    <property type="entry name" value="ERICH3"/>
</dbReference>
<dbReference type="PANTHER" id="PTHR23034">
    <property type="entry name" value="GLUTAMATE-RICH PROTEIN 3"/>
    <property type="match status" value="1"/>
</dbReference>
<dbReference type="PANTHER" id="PTHR23034:SF2">
    <property type="entry name" value="GLUTAMATE-RICH PROTEIN 3"/>
    <property type="match status" value="1"/>
</dbReference>
<dbReference type="Pfam" id="PF15257">
    <property type="entry name" value="DUF4590"/>
    <property type="match status" value="1"/>
</dbReference>
<proteinExistence type="evidence at protein level"/>
<evidence type="ECO:0000256" key="1">
    <source>
        <dbReference type="SAM" id="MobiDB-lite"/>
    </source>
</evidence>
<evidence type="ECO:0000269" key="2">
    <source>
    </source>
</evidence>
<evidence type="ECO:0000269" key="3">
    <source>
    </source>
</evidence>
<evidence type="ECO:0000269" key="4">
    <source>
    </source>
</evidence>
<evidence type="ECO:0000269" key="5">
    <source>
    </source>
</evidence>
<evidence type="ECO:0000303" key="6">
    <source>
    </source>
</evidence>
<evidence type="ECO:0000303" key="7">
    <source>
    </source>
</evidence>
<evidence type="ECO:0000303" key="8">
    <source>
    </source>
</evidence>
<evidence type="ECO:0000305" key="9"/>
<evidence type="ECO:0000312" key="10">
    <source>
        <dbReference type="HGNC" id="HGNC:25346"/>
    </source>
</evidence>
<sequence length="1530" mass="168466">MSHSHPAGLLAAYNSLMDKHLAGYFNNTRIRRHLLRSGLITRSGRILSEKEYKLNMMKRDHQKYIRECLAQAIFHKVLDMERYHQLEIKKKLETLARKERIQRFKGEHTRRSVENNMPILSPHPPVGPKSNRGHSVLVDEGHSSPLALTAPRPYTAPGNMQPPIRLQPLPSNPAVETVPKVTSRSRSKTSLLENEALFPIGGKKAVMKFRNSIGNSQRMNSYQLPNINSYMMPIPPPLPPTGKITRENRSETWRRRRFRPTTAPNGLEPLLTKDSRRIHKTSLHSNAAITMIYLGKNVHLSSDNPDFRDEIKVYQQHCGGENLCVYKGKLLEKETFQFISKRHHGFPFSLTFFLNGMQVNRLSSCCEYKHRKGSRLGGKRGYFGFVCVERSSPCYKCIIAMGLDKKPSLPKSRKEKSTEKGEELKKAEGKVRKEREYVIPKRNEIKENKTSVSAKFSAQEIKTGLKEVVTAVEEMTSKGKPGQEVLEDDQENTLKYEYEEDFEVDEEKQGEKSNEEGQADVQMNGIPQSPLDDKKDNLDPEKESETSSQKAPDARDNVKDENDGCSESELEEDKQDMKTASSTSSRSHPYSSDSEDESAVGDREAHTDSSTDESARRSSSQELSENDKPRKSHLPIEESLEIEIEDQEITKADVETKPMPIDESFENVLKEGTEKGTQEIAEGLSEKSGKHVSAEEKEKDKSKLWEESTAQVKDKKAGLPGLEEGGKDSLPLAYVLALGAPTMNFMVDETAAINSNKESQQLVQKTYTLEKKEAMEEDEAPQHRDADIVQGKGEAALWGEAGAVHEAPLRAWKPTAEQPELAEEFTEKREIPPGIERGAEGAAEAEGVRRLGEGGSDPIGQAAAKDAVGLSKDEAPEKQALMLTVLETDKAASEGEQGLEKAVLANEAAALNLEHLHEVAALREAATSEEGEAEGGVAVSDVGESEEEASIDLEDTGPMEDTASKREDGSEEAILGGEEPAKERKEVMRTETRLSPFTGEAEASRMQVSEGSPEEGSLAKEAFLCKEDVEGEEMVTEAEANREDDRKEILPKELDLARERRKAERPKTSLRKTDSEREEVTRANALKDEDAFKEEQKLKAEEGETETEVRAEEETKAPPNEMGSDAENEAPVEASELSDNPGLLGEDSLKETVVPIFEATPGFEKSLENITALRKEGGGERLSEARDTEHKDREELSSRENRALKEGHRQDGEGALAAPEAEPAGKVQAPEGLIPATGQAEELAAKDHDSCAGLEGRAEGQGGVDVVLRTQEAVAEEDPIMAEKFREEAVDEDPEEEEDKECTLETEAMQDRNSEGDGDMEGEGNTQKNEGMGGGRVVAVEVLHGGGETAETAAEEREVLAGSETAEEKTIANKASSFSDVAEEETWHQQDELVGKTAAAGKVVVEELARSGEEVPAAEEMTVTYTTEAGVGTPGALERKTSGLGQEQEEGSEGQEAATGSGDGRQETGAAEKFRLGLSREGERELSPESLQAMATLPVKPDFTETREKQQHMVQGESETADVSPNNVQV</sequence>
<protein>
    <recommendedName>
        <fullName evidence="8">Glutamate-rich protein 3</fullName>
    </recommendedName>
</protein>
<feature type="chain" id="PRO_0000304972" description="Glutamate-rich protein 3">
    <location>
        <begin position="1"/>
        <end position="1530"/>
    </location>
</feature>
<feature type="region of interest" description="Disordered" evidence="1">
    <location>
        <begin position="165"/>
        <end position="187"/>
    </location>
</feature>
<feature type="region of interest" description="Disordered" evidence="1">
    <location>
        <begin position="408"/>
        <end position="429"/>
    </location>
</feature>
<feature type="region of interest" description="Disordered" evidence="1">
    <location>
        <begin position="475"/>
        <end position="661"/>
    </location>
</feature>
<feature type="region of interest" description="Disordered" evidence="1">
    <location>
        <begin position="673"/>
        <end position="724"/>
    </location>
</feature>
<feature type="region of interest" description="Disordered" evidence="1">
    <location>
        <begin position="773"/>
        <end position="870"/>
    </location>
</feature>
<feature type="region of interest" description="Disordered" evidence="1">
    <location>
        <begin position="923"/>
        <end position="1146"/>
    </location>
</feature>
<feature type="region of interest" description="Disordered" evidence="1">
    <location>
        <begin position="1167"/>
        <end position="1334"/>
    </location>
</feature>
<feature type="region of interest" description="Disordered" evidence="1">
    <location>
        <begin position="1360"/>
        <end position="1383"/>
    </location>
</feature>
<feature type="region of interest" description="Disordered" evidence="1">
    <location>
        <begin position="1425"/>
        <end position="1530"/>
    </location>
</feature>
<feature type="compositionally biased region" description="Basic and acidic residues" evidence="1">
    <location>
        <begin position="415"/>
        <end position="429"/>
    </location>
</feature>
<feature type="compositionally biased region" description="Basic and acidic residues" evidence="1">
    <location>
        <begin position="531"/>
        <end position="545"/>
    </location>
</feature>
<feature type="compositionally biased region" description="Basic and acidic residues" evidence="1">
    <location>
        <begin position="552"/>
        <end position="562"/>
    </location>
</feature>
<feature type="compositionally biased region" description="Acidic residues" evidence="1">
    <location>
        <begin position="563"/>
        <end position="574"/>
    </location>
</feature>
<feature type="compositionally biased region" description="Low complexity" evidence="1">
    <location>
        <begin position="581"/>
        <end position="592"/>
    </location>
</feature>
<feature type="compositionally biased region" description="Basic and acidic residues" evidence="1">
    <location>
        <begin position="600"/>
        <end position="616"/>
    </location>
</feature>
<feature type="compositionally biased region" description="Acidic residues" evidence="1">
    <location>
        <begin position="638"/>
        <end position="647"/>
    </location>
</feature>
<feature type="compositionally biased region" description="Basic and acidic residues" evidence="1">
    <location>
        <begin position="684"/>
        <end position="717"/>
    </location>
</feature>
<feature type="compositionally biased region" description="Basic and acidic residues" evidence="1">
    <location>
        <begin position="773"/>
        <end position="787"/>
    </location>
</feature>
<feature type="compositionally biased region" description="Low complexity" evidence="1">
    <location>
        <begin position="834"/>
        <end position="845"/>
    </location>
</feature>
<feature type="compositionally biased region" description="Acidic residues" evidence="1">
    <location>
        <begin position="943"/>
        <end position="958"/>
    </location>
</feature>
<feature type="compositionally biased region" description="Basic and acidic residues" evidence="1">
    <location>
        <begin position="979"/>
        <end position="992"/>
    </location>
</feature>
<feature type="compositionally biased region" description="Basic and acidic residues" evidence="1">
    <location>
        <begin position="1039"/>
        <end position="1116"/>
    </location>
</feature>
<feature type="compositionally biased region" description="Basic and acidic residues" evidence="1">
    <location>
        <begin position="1173"/>
        <end position="1212"/>
    </location>
</feature>
<feature type="compositionally biased region" description="Low complexity" evidence="1">
    <location>
        <begin position="1213"/>
        <end position="1225"/>
    </location>
</feature>
<feature type="compositionally biased region" description="Acidic residues" evidence="1">
    <location>
        <begin position="1289"/>
        <end position="1300"/>
    </location>
</feature>
<feature type="compositionally biased region" description="Basic and acidic residues" evidence="1">
    <location>
        <begin position="1464"/>
        <end position="1487"/>
    </location>
</feature>
<feature type="compositionally biased region" description="Basic and acidic residues" evidence="1">
    <location>
        <begin position="1502"/>
        <end position="1511"/>
    </location>
</feature>
<feature type="compositionally biased region" description="Polar residues" evidence="1">
    <location>
        <begin position="1517"/>
        <end position="1530"/>
    </location>
</feature>
<feature type="splice variant" id="VSP_028159" description="In isoform 2." evidence="7">
    <location>
        <begin position="1"/>
        <end position="742"/>
    </location>
</feature>
<feature type="splice variant" id="VSP_028160" description="In isoform 3." evidence="6">
    <location>
        <begin position="1"/>
        <end position="197"/>
    </location>
</feature>
<feature type="splice variant" id="VSP_028161" description="In isoform 3." evidence="6">
    <original>FPIG</original>
    <variation>MLAK</variation>
    <location>
        <begin position="198"/>
        <end position="201"/>
    </location>
</feature>
<feature type="splice variant" id="VSP_028162" description="In isoform 3." evidence="6">
    <original>DSL</original>
    <variation>YGR</variation>
    <location>
        <begin position="728"/>
        <end position="730"/>
    </location>
</feature>
<feature type="splice variant" id="VSP_028163" description="In isoform 3." evidence="6">
    <location>
        <begin position="731"/>
        <end position="1530"/>
    </location>
</feature>
<feature type="sequence variant" id="VAR_035131" description="In dbSNP:rs11210490." evidence="2">
    <original>P</original>
    <variation>A</variation>
    <location>
        <position position="264"/>
    </location>
</feature>
<feature type="sequence variant" id="VAR_035132" description="In dbSNP:rs696698.">
    <original>R</original>
    <variation>H</variation>
    <location>
        <position position="555"/>
    </location>
</feature>
<feature type="sequence variant" id="VAR_035133" description="In dbSNP:rs17095653.">
    <original>I</original>
    <variation>V</variation>
    <location>
        <position position="636"/>
    </location>
</feature>
<feature type="sequence variant" id="VAR_035134" description="In dbSNP:rs2305549.">
    <original>H</original>
    <variation>R</variation>
    <location>
        <position position="691"/>
    </location>
</feature>
<feature type="sequence variant" id="VAR_035135" description="In dbSNP:rs11580409.">
    <original>L</original>
    <variation>V</variation>
    <location>
        <position position="1056"/>
    </location>
</feature>
<feature type="sequence variant" id="VAR_035136" description="In dbSNP:rs9326116." evidence="3">
    <original>V</original>
    <variation>M</variation>
    <location>
        <position position="1528"/>
    </location>
</feature>
<feature type="sequence conflict" description="In Ref. 4; BAC86994." evidence="9" ref="4">
    <original>E</original>
    <variation>G</variation>
    <location>
        <position position="1101"/>
    </location>
</feature>
<feature type="sequence conflict" description="In Ref. 1; CAD39076." evidence="9" ref="1">
    <location>
        <position position="1177"/>
    </location>
</feature>
<accession>Q5RHP9</accession>
<accession>Q68DL8</accession>
<accession>Q6GMR8</accession>
<accession>Q6ZSF9</accession>
<accession>Q8ND41</accession>
<keyword id="KW-0025">Alternative splicing</keyword>
<keyword id="KW-0966">Cell projection</keyword>
<keyword id="KW-0963">Cytoplasm</keyword>
<keyword id="KW-1267">Proteomics identification</keyword>
<keyword id="KW-1185">Reference proteome</keyword>